<proteinExistence type="evidence at transcript level"/>
<evidence type="ECO:0000250" key="1"/>
<evidence type="ECO:0000250" key="2">
    <source>
        <dbReference type="UniProtKB" id="P27467"/>
    </source>
</evidence>
<evidence type="ECO:0000250" key="3">
    <source>
        <dbReference type="UniProtKB" id="P28026"/>
    </source>
</evidence>
<evidence type="ECO:0000250" key="4">
    <source>
        <dbReference type="UniProtKB" id="P49893"/>
    </source>
</evidence>
<evidence type="ECO:0000250" key="5">
    <source>
        <dbReference type="UniProtKB" id="P56704"/>
    </source>
</evidence>
<evidence type="ECO:0000255" key="6"/>
<evidence type="ECO:0000269" key="7">
    <source>
    </source>
</evidence>
<evidence type="ECO:0000269" key="8">
    <source>
    </source>
</evidence>
<evidence type="ECO:0000269" key="9">
    <source>
    </source>
</evidence>
<evidence type="ECO:0000269" key="10">
    <source>
    </source>
</evidence>
<evidence type="ECO:0000303" key="11">
    <source>
    </source>
</evidence>
<evidence type="ECO:0000303" key="12">
    <source>
    </source>
</evidence>
<evidence type="ECO:0000303" key="13">
    <source>
    </source>
</evidence>
<evidence type="ECO:0000305" key="14"/>
<evidence type="ECO:0000312" key="15">
    <source>
        <dbReference type="EMBL" id="AAH78589.1"/>
    </source>
</evidence>
<evidence type="ECO:0000312" key="16">
    <source>
        <dbReference type="Xenbase" id="XB-GENE-866540"/>
    </source>
</evidence>
<reference key="1">
    <citation type="journal article" date="2005" name="Dev. Biol.">
        <title>Wnt11-R, a protein closely related to mammalian Wnt11, is required for heart morphogenesis in Xenopus.</title>
        <authorList>
            <person name="Garriock R.J."/>
            <person name="D'Agostino S.L."/>
            <person name="Pilcher K.C."/>
            <person name="Krieg P.A."/>
        </authorList>
    </citation>
    <scope>NUCLEOTIDE SEQUENCE [MRNA]</scope>
    <scope>FUNCTION</scope>
    <scope>TISSUE SPECIFICITY</scope>
    <scope>DEVELOPMENTAL STAGE</scope>
    <source>
        <tissue evidence="7">Tadpole heart</tissue>
    </source>
</reference>
<reference key="2">
    <citation type="submission" date="2008-11" db="EMBL/GenBank/DDBJ databases">
        <authorList>
            <consortium name="NIH - Xenopus Gene Collection (XGC) project"/>
        </authorList>
    </citation>
    <scope>NUCLEOTIDE SEQUENCE [LARGE SCALE MRNA]</scope>
    <source>
        <tissue evidence="15">Tadpole</tissue>
    </source>
</reference>
<reference key="3">
    <citation type="journal article" date="1993" name="Development">
        <title>Xwnt-11: a maternally expressed Xenopus wnt gene.</title>
        <authorList>
            <person name="Ku M."/>
            <person name="Melton D.A."/>
        </authorList>
    </citation>
    <scope>IDENTIFICATION</scope>
</reference>
<reference key="4">
    <citation type="journal article" date="2007" name="Dev. Biol.">
        <title>Wnt11-R signaling regulates a calcium sensitive EMT event essential for dorsal fin development of Xenopus.</title>
        <authorList>
            <person name="Garriock R.J."/>
            <person name="Krieg P.A."/>
        </authorList>
    </citation>
    <scope>FUNCTION</scope>
    <scope>TISSUE SPECIFICITY</scope>
</reference>
<reference key="5">
    <citation type="journal article" date="2007" name="Dev. Dyn.">
        <title>Census of vertebrate Wnt genes: isolation and developmental expression of Xenopus Wnt2, Wnt3, Wnt9a, Wnt9b, Wnt10a, and Wnt16.</title>
        <authorList>
            <person name="Garriock R.J."/>
            <person name="Warkman A.S."/>
            <person name="Meadows S.M."/>
            <person name="D'Agostino S."/>
            <person name="Krieg P.A."/>
        </authorList>
    </citation>
    <scope>NOMENCLATURE</scope>
</reference>
<reference key="6">
    <citation type="journal article" date="2008" name="Dev. Dyn.">
        <title>Wnt11r is required for cranial neural crest migration.</title>
        <authorList>
            <person name="Matthews H.K."/>
            <person name="Broders-Bondon F."/>
            <person name="Thiery J.P."/>
            <person name="Mayor R."/>
        </authorList>
    </citation>
    <scope>FUNCTION</scope>
    <scope>SUBCELLULAR LOCATION</scope>
    <scope>TISSUE SPECIFICITY</scope>
</reference>
<reference key="7">
    <citation type="journal article" date="2010" name="Dev. Dyn.">
        <title>Xenopus Wnt11b is identified as a potential pronephric inducer.</title>
        <authorList>
            <person name="Tetelin S."/>
            <person name="Jones E.A."/>
        </authorList>
    </citation>
    <scope>FUNCTION</scope>
    <scope>TISSUE SPECIFICITY</scope>
</reference>
<organism>
    <name type="scientific">Xenopus laevis</name>
    <name type="common">African clawed frog</name>
    <dbReference type="NCBI Taxonomy" id="8355"/>
    <lineage>
        <taxon>Eukaryota</taxon>
        <taxon>Metazoa</taxon>
        <taxon>Chordata</taxon>
        <taxon>Craniata</taxon>
        <taxon>Vertebrata</taxon>
        <taxon>Euteleostomi</taxon>
        <taxon>Amphibia</taxon>
        <taxon>Batrachia</taxon>
        <taxon>Anura</taxon>
        <taxon>Pipoidea</taxon>
        <taxon>Pipidae</taxon>
        <taxon>Xenopodinae</taxon>
        <taxon>Xenopus</taxon>
        <taxon>Xenopus</taxon>
    </lineage>
</organism>
<feature type="signal peptide" evidence="6">
    <location>
        <begin position="1"/>
        <end position="22"/>
    </location>
</feature>
<feature type="chain" id="PRO_0000397206" description="Protein Wnt-11" evidence="6">
    <location>
        <begin position="23"/>
        <end position="352"/>
    </location>
</feature>
<feature type="modified residue" description="Sulfotyrosine" evidence="4">
    <location>
        <position position="273"/>
    </location>
</feature>
<feature type="modified residue" description="Sulfotyrosine" evidence="4">
    <location>
        <position position="280"/>
    </location>
</feature>
<feature type="lipid moiety-binding region" description="O-palmitoleoyl serine; by PORCN" evidence="5">
    <location>
        <position position="213"/>
    </location>
</feature>
<feature type="glycosylation site" description="N-linked (GlcNAc...) asparagine" evidence="6">
    <location>
        <position position="38"/>
    </location>
</feature>
<feature type="glycosylation site" description="N-linked (GlcNAc...) asparagine" evidence="6">
    <location>
        <position position="88"/>
    </location>
</feature>
<feature type="glycosylation site" description="N-linked (GlcNAc...) asparagine" evidence="6">
    <location>
        <position position="298"/>
    </location>
</feature>
<feature type="disulfide bond" evidence="3">
    <location>
        <begin position="78"/>
        <end position="89"/>
    </location>
</feature>
<feature type="disulfide bond" evidence="3">
    <location>
        <begin position="128"/>
        <end position="136"/>
    </location>
</feature>
<feature type="disulfide bond" evidence="3">
    <location>
        <begin position="138"/>
        <end position="155"/>
    </location>
</feature>
<feature type="disulfide bond" evidence="3">
    <location>
        <begin position="207"/>
        <end position="221"/>
    </location>
</feature>
<feature type="disulfide bond" evidence="3">
    <location>
        <begin position="209"/>
        <end position="216"/>
    </location>
</feature>
<feature type="disulfide bond" evidence="3">
    <location>
        <begin position="281"/>
        <end position="312"/>
    </location>
</feature>
<feature type="disulfide bond" evidence="3">
    <location>
        <begin position="297"/>
        <end position="307"/>
    </location>
</feature>
<feature type="disulfide bond" evidence="3">
    <location>
        <begin position="311"/>
        <end position="351"/>
    </location>
</feature>
<feature type="disulfide bond" evidence="3">
    <location>
        <begin position="327"/>
        <end position="342"/>
    </location>
</feature>
<feature type="disulfide bond" evidence="3">
    <location>
        <begin position="329"/>
        <end position="339"/>
    </location>
</feature>
<feature type="disulfide bond" evidence="3">
    <location>
        <begin position="334"/>
        <end position="335"/>
    </location>
</feature>
<feature type="sequence conflict" description="In Ref. 2; AAH78589." evidence="14" ref="2">
    <original>T</original>
    <variation>G</variation>
    <location>
        <position position="31"/>
    </location>
</feature>
<gene>
    <name evidence="16" type="primary">wnt11</name>
    <name type="synonym">wnt11r</name>
</gene>
<comment type="function">
    <text evidence="1 7 8 9 10">Ligand for members of the frizzled family of seven transmembrane receptors (By similarity). Shares much functionality with wnt11b. Signals through a non-canonical Wnt pathway to activate Jun-N-terminal kinase (JNK) to regulate gastrulation movements. Acts in a non-cell-autonomous manner to control neural crest migration, probably acting as an extracellular signal from surrounding tissue, but is not required for neural crest induction. Acts redundantly with wnt11b during pronephros induction. Regulates cardiac morphogenesis through the activation of JNK, but is not required for cardiac differentiation. Essential for dorsal fin development; required for an epithelial to mesenchymal transformation event prior to migration of cells into the fin, and ultimately for maintenance of fin structure. Mediates dorsal fin development through a non-canonical pathway mediated by Ca(2+).</text>
</comment>
<comment type="subcellular location">
    <subcellularLocation>
        <location evidence="9">Secreted</location>
        <location evidence="9">Extracellular space</location>
        <location evidence="9">Extracellular matrix</location>
    </subcellularLocation>
</comment>
<comment type="tissue specificity">
    <text evidence="7 8 9 10">In embryos, expressed in the neural tube, dorsal somite, mesenchymal cells within the dorsal fin, branchial arches and heart muscle, becoming expressed throughout the myocardium by the tadpole stage (stage 45). Prior to neural crest cell migration, expressed in a domain flanking the neural crest on the medial or neural (the opposite side to wnt11b). Weakly expressed in the developing pronephros from stage 25, with expression increasing from stages 30 to 35.</text>
</comment>
<comment type="developmental stage">
    <text evidence="7">Expressed after gastrulation (post stage 13).</text>
</comment>
<comment type="PTM">
    <text evidence="4">Glycosylation is required for protein secretion.</text>
</comment>
<comment type="PTM">
    <text evidence="2 5">Palmitoleoylation is required for efficient binding to frizzled receptors. Depalmitoleoylation leads to Wnt signaling pathway inhibition.</text>
</comment>
<comment type="miscellaneous">
    <text evidence="12 13">Xenopus and other lower vertebrates contain duplicated wnt11 genes resulting from an ancient gene duplication event, but the second copy has since been lost in mammals. This gene was originally called wnt11r (PubMed:8306880). but was renamed to wnt11 to reflect its orthology (PubMed:17436276).</text>
</comment>
<comment type="similarity">
    <text evidence="6">Belongs to the Wnt family.</text>
</comment>
<keyword id="KW-0217">Developmental protein</keyword>
<keyword id="KW-1015">Disulfide bond</keyword>
<keyword id="KW-0272">Extracellular matrix</keyword>
<keyword id="KW-0306">Gastrulation</keyword>
<keyword id="KW-0325">Glycoprotein</keyword>
<keyword id="KW-0449">Lipoprotein</keyword>
<keyword id="KW-1185">Reference proteome</keyword>
<keyword id="KW-0964">Secreted</keyword>
<keyword id="KW-0732">Signal</keyword>
<keyword id="KW-0765">Sulfation</keyword>
<keyword id="KW-0879">Wnt signaling pathway</keyword>
<accession>Q670P5</accession>
<accession>Q66KR3</accession>
<name>WNT11_XENLA</name>
<dbReference type="EMBL" id="AY695415">
    <property type="protein sequence ID" value="AAU05603.1"/>
    <property type="molecule type" value="mRNA"/>
</dbReference>
<dbReference type="EMBL" id="BC078589">
    <property type="protein sequence ID" value="AAH78589.1"/>
    <property type="molecule type" value="mRNA"/>
</dbReference>
<dbReference type="EMBL" id="BC169466">
    <property type="protein sequence ID" value="AAI69466.1"/>
    <property type="molecule type" value="mRNA"/>
</dbReference>
<dbReference type="EMBL" id="BC169468">
    <property type="protein sequence ID" value="AAI69468.1"/>
    <property type="molecule type" value="mRNA"/>
</dbReference>
<dbReference type="RefSeq" id="NP_001087079.1">
    <property type="nucleotide sequence ID" value="NM_001093610.1"/>
</dbReference>
<dbReference type="SMR" id="Q670P5"/>
<dbReference type="BioGRID" id="103775">
    <property type="interactions" value="1"/>
</dbReference>
<dbReference type="GlyCosmos" id="Q670P5">
    <property type="glycosylation" value="3 sites, No reported glycans"/>
</dbReference>
<dbReference type="GeneID" id="446915"/>
<dbReference type="KEGG" id="xla:446915"/>
<dbReference type="AGR" id="Xenbase:XB-GENE-866540"/>
<dbReference type="CTD" id="446915"/>
<dbReference type="Xenbase" id="XB-GENE-866540">
    <property type="gene designation" value="wnt11.S"/>
</dbReference>
<dbReference type="OrthoDB" id="5945655at2759"/>
<dbReference type="Proteomes" id="UP000186698">
    <property type="component" value="Chromosome 2S"/>
</dbReference>
<dbReference type="Bgee" id="446915">
    <property type="expression patterns" value="Expressed in neurula embryo and 12 other cell types or tissues"/>
</dbReference>
<dbReference type="GO" id="GO:0005576">
    <property type="term" value="C:extracellular region"/>
    <property type="evidence" value="ECO:0000314"/>
    <property type="project" value="UniProtKB"/>
</dbReference>
<dbReference type="GO" id="GO:0005615">
    <property type="term" value="C:extracellular space"/>
    <property type="evidence" value="ECO:0000318"/>
    <property type="project" value="GO_Central"/>
</dbReference>
<dbReference type="GO" id="GO:0005125">
    <property type="term" value="F:cytokine activity"/>
    <property type="evidence" value="ECO:0000318"/>
    <property type="project" value="GO_Central"/>
</dbReference>
<dbReference type="GO" id="GO:0005109">
    <property type="term" value="F:frizzled binding"/>
    <property type="evidence" value="ECO:0000318"/>
    <property type="project" value="GO_Central"/>
</dbReference>
<dbReference type="GO" id="GO:0060070">
    <property type="term" value="P:canonical Wnt signaling pathway"/>
    <property type="evidence" value="ECO:0000318"/>
    <property type="project" value="GO_Central"/>
</dbReference>
<dbReference type="GO" id="GO:0045165">
    <property type="term" value="P:cell fate commitment"/>
    <property type="evidence" value="ECO:0000318"/>
    <property type="project" value="GO_Central"/>
</dbReference>
<dbReference type="GO" id="GO:0033337">
    <property type="term" value="P:dorsal fin development"/>
    <property type="evidence" value="ECO:0000315"/>
    <property type="project" value="UniProtKB"/>
</dbReference>
<dbReference type="GO" id="GO:0000578">
    <property type="term" value="P:embryonic axis specification"/>
    <property type="evidence" value="ECO:0000314"/>
    <property type="project" value="BHF-UCL"/>
</dbReference>
<dbReference type="GO" id="GO:0007369">
    <property type="term" value="P:gastrulation"/>
    <property type="evidence" value="ECO:0007669"/>
    <property type="project" value="UniProtKB-KW"/>
</dbReference>
<dbReference type="GO" id="GO:0003007">
    <property type="term" value="P:heart morphogenesis"/>
    <property type="evidence" value="ECO:0000315"/>
    <property type="project" value="UniProtKB"/>
</dbReference>
<dbReference type="GO" id="GO:0090090">
    <property type="term" value="P:negative regulation of canonical Wnt signaling pathway"/>
    <property type="evidence" value="ECO:0000314"/>
    <property type="project" value="DFLAT"/>
</dbReference>
<dbReference type="GO" id="GO:0001755">
    <property type="term" value="P:neural crest cell migration"/>
    <property type="evidence" value="ECO:0000315"/>
    <property type="project" value="UniProtKB"/>
</dbReference>
<dbReference type="GO" id="GO:0030182">
    <property type="term" value="P:neuron differentiation"/>
    <property type="evidence" value="ECO:0000318"/>
    <property type="project" value="GO_Central"/>
</dbReference>
<dbReference type="GO" id="GO:0035567">
    <property type="term" value="P:non-canonical Wnt signaling pathway"/>
    <property type="evidence" value="ECO:0000315"/>
    <property type="project" value="UniProtKB"/>
</dbReference>
<dbReference type="GO" id="GO:0046330">
    <property type="term" value="P:positive regulation of JNK cascade"/>
    <property type="evidence" value="ECO:0000315"/>
    <property type="project" value="UniProtKB"/>
</dbReference>
<dbReference type="GO" id="GO:0048793">
    <property type="term" value="P:pronephros development"/>
    <property type="evidence" value="ECO:0000315"/>
    <property type="project" value="UniProtKB"/>
</dbReference>
<dbReference type="GO" id="GO:0010470">
    <property type="term" value="P:regulation of gastrulation"/>
    <property type="evidence" value="ECO:0000315"/>
    <property type="project" value="UniProtKB"/>
</dbReference>
<dbReference type="CDD" id="cd19343">
    <property type="entry name" value="Wnt_Wnt11"/>
    <property type="match status" value="1"/>
</dbReference>
<dbReference type="FunFam" id="3.30.2460.20:FF:000001">
    <property type="entry name" value="Wnt homolog"/>
    <property type="match status" value="1"/>
</dbReference>
<dbReference type="Gene3D" id="3.30.2460.20">
    <property type="match status" value="1"/>
</dbReference>
<dbReference type="InterPro" id="IPR005817">
    <property type="entry name" value="Wnt"/>
</dbReference>
<dbReference type="InterPro" id="IPR043158">
    <property type="entry name" value="Wnt_C"/>
</dbReference>
<dbReference type="InterPro" id="IPR018161">
    <property type="entry name" value="Wnt_CS"/>
</dbReference>
<dbReference type="PANTHER" id="PTHR12027:SF7">
    <property type="entry name" value="PROTEIN WNT-11"/>
    <property type="match status" value="1"/>
</dbReference>
<dbReference type="PANTHER" id="PTHR12027">
    <property type="entry name" value="WNT RELATED"/>
    <property type="match status" value="1"/>
</dbReference>
<dbReference type="Pfam" id="PF00110">
    <property type="entry name" value="wnt"/>
    <property type="match status" value="1"/>
</dbReference>
<dbReference type="PRINTS" id="PR01349">
    <property type="entry name" value="WNTPROTEIN"/>
</dbReference>
<dbReference type="SMART" id="SM00097">
    <property type="entry name" value="WNT1"/>
    <property type="match status" value="1"/>
</dbReference>
<dbReference type="PROSITE" id="PS00246">
    <property type="entry name" value="WNT1"/>
    <property type="match status" value="1"/>
</dbReference>
<sequence>MKIYFLLGTFLTFLLHTRICQGIKWLALSKTPLSLPLNQTQHCKQLEGLVSSQMQLCRSNLELMQTIIHAAKEVKKTCVKAFTDMRWNCSSIELAPTFHQDLERGTRESAFVHALSAAAISHTIARACTTGDIPGCSCAPIPGESPGPGYRWGGCADNLNYGILMGSKFSDAPMKMKKSGSQANKLMHLHNSEVGRQVLKASLEMKCKCHGVSGSCSIKTCWRGLQELREIALDLKTKYLSATKVVHRPMGTRKHLVPKDIDIRPVQETELIYLQSSPDYCLKNEKIGSHGTHERQCNKTSNGSDSCDLMCCGRGYNPYMDKVVERCLCKYHWCCYVTCKKCERTVERYVCK</sequence>
<protein>
    <recommendedName>
        <fullName evidence="12">Protein Wnt-11</fullName>
    </recommendedName>
    <alternativeName>
        <fullName evidence="11">Protein Wnt-11-related</fullName>
        <shortName evidence="11">Wnt11-R</shortName>
        <shortName evidence="11">Wnt11r</shortName>
    </alternativeName>
</protein>